<comment type="function">
    <text evidence="3">Probable transcription factor (PubMed:28056346). Involved in motor neuron fate determination and maintenance, acting as a transcriptional repressor to counteract gene activation by transcription factor unc-3 in a subset of motor neurons (PubMed:28056346). Required throughout development to repress transcription by unc-3, probably acting by binding to specific promoter elements (PubMed:28056346). Represses expression of DA and DB motor neuron-specific effector genes, such as unc-129 and unc-53, in VA and VB motor neurons (PubMed:28056346).</text>
</comment>
<comment type="subcellular location">
    <subcellularLocation>
        <location evidence="3">Nucleus</location>
    </subcellularLocation>
</comment>
<comment type="tissue specificity">
    <text evidence="3">Expressed in the VA and VB motor neurons and at lower levels in the SABV neuron pair.</text>
</comment>
<comment type="developmental stage">
    <text evidence="3">Expression begins around the postembryonic birth of VA and VB motor neurons at the late first larval L1 stage, and is maintained throughout the life of the animals.</text>
</comment>
<keyword id="KW-0479">Metal-binding</keyword>
<keyword id="KW-0539">Nucleus</keyword>
<keyword id="KW-1185">Reference proteome</keyword>
<keyword id="KW-0677">Repeat</keyword>
<keyword id="KW-0804">Transcription</keyword>
<keyword id="KW-0805">Transcription regulation</keyword>
<keyword id="KW-0862">Zinc</keyword>
<keyword id="KW-0863">Zinc-finger</keyword>
<evidence type="ECO:0000255" key="1">
    <source>
        <dbReference type="PROSITE-ProRule" id="PRU00042"/>
    </source>
</evidence>
<evidence type="ECO:0000256" key="2">
    <source>
        <dbReference type="SAM" id="MobiDB-lite"/>
    </source>
</evidence>
<evidence type="ECO:0000269" key="3">
    <source>
    </source>
</evidence>
<evidence type="ECO:0000305" key="4"/>
<evidence type="ECO:0000312" key="5">
    <source>
        <dbReference type="Proteomes" id="UP000001940"/>
    </source>
</evidence>
<evidence type="ECO:0000312" key="6">
    <source>
        <dbReference type="WormBase" id="F55C5.11"/>
    </source>
</evidence>
<dbReference type="EMBL" id="BX284605">
    <property type="protein sequence ID" value="CAJ85750.1"/>
    <property type="molecule type" value="Genomic_DNA"/>
</dbReference>
<dbReference type="RefSeq" id="NP_001041125.1">
    <property type="nucleotide sequence ID" value="NM_001047660.4"/>
</dbReference>
<dbReference type="SMR" id="Q1ZXU0"/>
<dbReference type="STRING" id="6239.F55C5.11.1"/>
<dbReference type="PaxDb" id="6239-F55C5.11"/>
<dbReference type="EnsemblMetazoa" id="F55C5.11.1">
    <property type="protein sequence ID" value="F55C5.11.1"/>
    <property type="gene ID" value="WBGene00044791"/>
</dbReference>
<dbReference type="GeneID" id="4363106"/>
<dbReference type="KEGG" id="cel:CELE_F55C5.11"/>
<dbReference type="UCSC" id="F55C5.11">
    <property type="organism name" value="c. elegans"/>
</dbReference>
<dbReference type="AGR" id="WB:WBGene00044791"/>
<dbReference type="CTD" id="4363106"/>
<dbReference type="WormBase" id="F55C5.11">
    <property type="protein sequence ID" value="CE40071"/>
    <property type="gene ID" value="WBGene00044791"/>
    <property type="gene designation" value="bnc-1"/>
</dbReference>
<dbReference type="eggNOG" id="ENOG502QR8N">
    <property type="taxonomic scope" value="Eukaryota"/>
</dbReference>
<dbReference type="GeneTree" id="ENSGT00390000005844"/>
<dbReference type="HOGENOM" id="CLU_1338631_0_0_1"/>
<dbReference type="InParanoid" id="Q1ZXU0"/>
<dbReference type="OMA" id="LREMHTC"/>
<dbReference type="OrthoDB" id="10070972at2759"/>
<dbReference type="PhylomeDB" id="Q1ZXU0"/>
<dbReference type="PRO" id="PR:Q1ZXU0"/>
<dbReference type="Proteomes" id="UP000001940">
    <property type="component" value="Chromosome V"/>
</dbReference>
<dbReference type="Bgee" id="WBGene00044791">
    <property type="expression patterns" value="Expressed in larva"/>
</dbReference>
<dbReference type="GO" id="GO:0005634">
    <property type="term" value="C:nucleus"/>
    <property type="evidence" value="ECO:0007669"/>
    <property type="project" value="UniProtKB-SubCell"/>
</dbReference>
<dbReference type="GO" id="GO:0008270">
    <property type="term" value="F:zinc ion binding"/>
    <property type="evidence" value="ECO:0007669"/>
    <property type="project" value="UniProtKB-KW"/>
</dbReference>
<dbReference type="GO" id="GO:0001708">
    <property type="term" value="P:cell fate specification"/>
    <property type="evidence" value="ECO:0000315"/>
    <property type="project" value="UniProtKB"/>
</dbReference>
<dbReference type="GO" id="GO:0000122">
    <property type="term" value="P:negative regulation of transcription by RNA polymerase II"/>
    <property type="evidence" value="ECO:0000315"/>
    <property type="project" value="UniProtKB"/>
</dbReference>
<dbReference type="Gene3D" id="3.30.160.60">
    <property type="entry name" value="Classic Zinc Finger"/>
    <property type="match status" value="1"/>
</dbReference>
<dbReference type="InterPro" id="IPR040436">
    <property type="entry name" value="Disconnected-like"/>
</dbReference>
<dbReference type="InterPro" id="IPR036236">
    <property type="entry name" value="Znf_C2H2_sf"/>
</dbReference>
<dbReference type="InterPro" id="IPR013087">
    <property type="entry name" value="Znf_C2H2_type"/>
</dbReference>
<dbReference type="PANTHER" id="PTHR15021:SF0">
    <property type="entry name" value="DISCO-RELATED, ISOFORM A-RELATED"/>
    <property type="match status" value="1"/>
</dbReference>
<dbReference type="PANTHER" id="PTHR15021">
    <property type="entry name" value="DISCONNECTED-RELATED"/>
    <property type="match status" value="1"/>
</dbReference>
<dbReference type="Pfam" id="PF00096">
    <property type="entry name" value="zf-C2H2"/>
    <property type="match status" value="1"/>
</dbReference>
<dbReference type="SMART" id="SM00355">
    <property type="entry name" value="ZnF_C2H2"/>
    <property type="match status" value="2"/>
</dbReference>
<dbReference type="SUPFAM" id="SSF57667">
    <property type="entry name" value="beta-beta-alpha zinc fingers"/>
    <property type="match status" value="1"/>
</dbReference>
<dbReference type="PROSITE" id="PS00028">
    <property type="entry name" value="ZINC_FINGER_C2H2_1"/>
    <property type="match status" value="1"/>
</dbReference>
<dbReference type="PROSITE" id="PS50157">
    <property type="entry name" value="ZINC_FINGER_C2H2_2"/>
    <property type="match status" value="2"/>
</dbReference>
<proteinExistence type="evidence at protein level"/>
<name>BNCH_CAEEL</name>
<organism evidence="5">
    <name type="scientific">Caenorhabditis elegans</name>
    <dbReference type="NCBI Taxonomy" id="6239"/>
    <lineage>
        <taxon>Eukaryota</taxon>
        <taxon>Metazoa</taxon>
        <taxon>Ecdysozoa</taxon>
        <taxon>Nematoda</taxon>
        <taxon>Chromadorea</taxon>
        <taxon>Rhabditida</taxon>
        <taxon>Rhabditina</taxon>
        <taxon>Rhabditomorpha</taxon>
        <taxon>Rhabditoidea</taxon>
        <taxon>Rhabditidae</taxon>
        <taxon>Peloderinae</taxon>
        <taxon>Caenorhabditis</taxon>
    </lineage>
</organism>
<feature type="chain" id="PRO_0000455336" description="Basonuclin zinc finger protein homolog">
    <location>
        <begin position="1"/>
        <end position="205"/>
    </location>
</feature>
<feature type="zinc finger region" description="C2H2-type 1" evidence="1">
    <location>
        <begin position="107"/>
        <end position="130"/>
    </location>
</feature>
<feature type="zinc finger region" description="C2H2-type 2" evidence="1">
    <location>
        <begin position="135"/>
        <end position="164"/>
    </location>
</feature>
<feature type="region of interest" description="Disordered" evidence="2">
    <location>
        <begin position="145"/>
        <end position="168"/>
    </location>
</feature>
<feature type="mutagenesis site" description="In ot763; Induces ectopic expression of unc-129 and unc-53 in ventral nerve cord motor neurons (MNs)." evidence="3">
    <location>
        <begin position="32"/>
        <end position="205"/>
    </location>
</feature>
<feature type="mutagenesis site" description="In ot721; Induces ectopic expression of unc-129, unc-53, acr-16 and unc-8 in ventral nerve cord motor neurons (MNs) VA and VB. In an unc-3 mutant background, both normal and ectopic expression of unc-129 in ventral nerve cord MNs is abolished." evidence="3">
    <original>C</original>
    <variation>Y</variation>
    <location>
        <position position="137"/>
    </location>
</feature>
<sequence length="205" mass="23144">MDVRFPPYIFSMPHLIYNSWLSLNAPKLAQLQLQSIKLVGQDKSINQSELPVNSENISIRVETETNIDSLAKEEKLSEHVHDEKADKIEKTSEDNDTSTLLKLKRRVACDICSKSFCDKGALKIHTSAVHLREMHTCTVTGCGKQFSSRRSRNRHSSNNNPKLHMPESLTLTGSGLSMKTSLDTFWPTRFLLGKDHPLDLSLNLV</sequence>
<protein>
    <recommendedName>
        <fullName evidence="4">Basonuclin zinc finger protein homolog</fullName>
    </recommendedName>
</protein>
<gene>
    <name evidence="6" type="primary">bnc-1</name>
    <name evidence="6" type="ORF">F55C5.11</name>
</gene>
<reference evidence="5" key="1">
    <citation type="journal article" date="1998" name="Science">
        <title>Genome sequence of the nematode C. elegans: a platform for investigating biology.</title>
        <authorList>
            <consortium name="The C. elegans sequencing consortium"/>
        </authorList>
    </citation>
    <scope>NUCLEOTIDE SEQUENCE [LARGE SCALE GENOMIC DNA]</scope>
    <source>
        <strain evidence="5">Bristol N2</strain>
    </source>
</reference>
<reference evidence="4" key="2">
    <citation type="journal article" date="2017" name="Neuron">
        <title>Diversification of C. elegans Motor Neuron Identity via Selective Effector Gene Repression.</title>
        <authorList>
            <person name="Kerk S.Y."/>
            <person name="Kratsios P."/>
            <person name="Hart M."/>
            <person name="Mourao R."/>
            <person name="Hobert O."/>
        </authorList>
    </citation>
    <scope>FUNCTION</scope>
    <scope>SUBCELLULAR LOCATION</scope>
    <scope>TISSUE SPECIFICITY</scope>
    <scope>DEVELOPMENTAL STAGE</scope>
    <scope>MUTAGENESIS OF 32-GLN--VAL-205 AND CYS-137</scope>
</reference>
<accession>Q1ZXU0</accession>